<organism>
    <name type="scientific">Rhizobium johnstonii (strain DSM 114642 / LMG 32736 / 3841)</name>
    <name type="common">Rhizobium leguminosarum bv. viciae</name>
    <dbReference type="NCBI Taxonomy" id="216596"/>
    <lineage>
        <taxon>Bacteria</taxon>
        <taxon>Pseudomonadati</taxon>
        <taxon>Pseudomonadota</taxon>
        <taxon>Alphaproteobacteria</taxon>
        <taxon>Hyphomicrobiales</taxon>
        <taxon>Rhizobiaceae</taxon>
        <taxon>Rhizobium/Agrobacterium group</taxon>
        <taxon>Rhizobium</taxon>
        <taxon>Rhizobium johnstonii</taxon>
    </lineage>
</organism>
<accession>Q1MAN2</accession>
<feature type="chain" id="PRO_0000350358" description="Dual-specificity RNA methyltransferase RlmN">
    <location>
        <begin position="1"/>
        <end position="408"/>
    </location>
</feature>
<feature type="domain" description="Radical SAM core" evidence="2">
    <location>
        <begin position="126"/>
        <end position="375"/>
    </location>
</feature>
<feature type="active site" description="Proton acceptor" evidence="1">
    <location>
        <position position="120"/>
    </location>
</feature>
<feature type="active site" description="S-methylcysteine intermediate" evidence="1">
    <location>
        <position position="378"/>
    </location>
</feature>
<feature type="binding site" evidence="1">
    <location>
        <position position="140"/>
    </location>
    <ligand>
        <name>[4Fe-4S] cluster</name>
        <dbReference type="ChEBI" id="CHEBI:49883"/>
        <note>4Fe-4S-S-AdoMet</note>
    </ligand>
</feature>
<feature type="binding site" evidence="1">
    <location>
        <position position="144"/>
    </location>
    <ligand>
        <name>[4Fe-4S] cluster</name>
        <dbReference type="ChEBI" id="CHEBI:49883"/>
        <note>4Fe-4S-S-AdoMet</note>
    </ligand>
</feature>
<feature type="binding site" evidence="1">
    <location>
        <position position="147"/>
    </location>
    <ligand>
        <name>[4Fe-4S] cluster</name>
        <dbReference type="ChEBI" id="CHEBI:49883"/>
        <note>4Fe-4S-S-AdoMet</note>
    </ligand>
</feature>
<feature type="binding site" evidence="1">
    <location>
        <begin position="204"/>
        <end position="205"/>
    </location>
    <ligand>
        <name>S-adenosyl-L-methionine</name>
        <dbReference type="ChEBI" id="CHEBI:59789"/>
    </ligand>
</feature>
<feature type="binding site" evidence="1">
    <location>
        <position position="236"/>
    </location>
    <ligand>
        <name>S-adenosyl-L-methionine</name>
        <dbReference type="ChEBI" id="CHEBI:59789"/>
    </ligand>
</feature>
<feature type="binding site" evidence="1">
    <location>
        <begin position="258"/>
        <end position="260"/>
    </location>
    <ligand>
        <name>S-adenosyl-L-methionine</name>
        <dbReference type="ChEBI" id="CHEBI:59789"/>
    </ligand>
</feature>
<feature type="binding site" evidence="1">
    <location>
        <position position="335"/>
    </location>
    <ligand>
        <name>S-adenosyl-L-methionine</name>
        <dbReference type="ChEBI" id="CHEBI:59789"/>
    </ligand>
</feature>
<feature type="disulfide bond" description="(transient)" evidence="1">
    <location>
        <begin position="133"/>
        <end position="378"/>
    </location>
</feature>
<dbReference type="EC" id="2.1.1.192" evidence="1"/>
<dbReference type="EMBL" id="AM236080">
    <property type="protein sequence ID" value="CAK10006.1"/>
    <property type="molecule type" value="Genomic_DNA"/>
</dbReference>
<dbReference type="RefSeq" id="WP_011653883.1">
    <property type="nucleotide sequence ID" value="NC_008380.1"/>
</dbReference>
<dbReference type="SMR" id="Q1MAN2"/>
<dbReference type="EnsemblBacteria" id="CAK10006">
    <property type="protein sequence ID" value="CAK10006"/>
    <property type="gene ID" value="RL4522"/>
</dbReference>
<dbReference type="KEGG" id="rle:RL4522"/>
<dbReference type="eggNOG" id="COG0820">
    <property type="taxonomic scope" value="Bacteria"/>
</dbReference>
<dbReference type="HOGENOM" id="CLU_029101_2_0_5"/>
<dbReference type="Proteomes" id="UP000006575">
    <property type="component" value="Chromosome"/>
</dbReference>
<dbReference type="GO" id="GO:0005737">
    <property type="term" value="C:cytoplasm"/>
    <property type="evidence" value="ECO:0007669"/>
    <property type="project" value="UniProtKB-SubCell"/>
</dbReference>
<dbReference type="GO" id="GO:0051539">
    <property type="term" value="F:4 iron, 4 sulfur cluster binding"/>
    <property type="evidence" value="ECO:0007669"/>
    <property type="project" value="UniProtKB-UniRule"/>
</dbReference>
<dbReference type="GO" id="GO:0046872">
    <property type="term" value="F:metal ion binding"/>
    <property type="evidence" value="ECO:0007669"/>
    <property type="project" value="UniProtKB-KW"/>
</dbReference>
<dbReference type="GO" id="GO:0070040">
    <property type="term" value="F:rRNA (adenine(2503)-C2-)-methyltransferase activity"/>
    <property type="evidence" value="ECO:0007669"/>
    <property type="project" value="UniProtKB-UniRule"/>
</dbReference>
<dbReference type="GO" id="GO:0019843">
    <property type="term" value="F:rRNA binding"/>
    <property type="evidence" value="ECO:0007669"/>
    <property type="project" value="UniProtKB-UniRule"/>
</dbReference>
<dbReference type="GO" id="GO:0002935">
    <property type="term" value="F:tRNA (adenine(37)-C2)-methyltransferase activity"/>
    <property type="evidence" value="ECO:0007669"/>
    <property type="project" value="UniProtKB-UniRule"/>
</dbReference>
<dbReference type="GO" id="GO:0000049">
    <property type="term" value="F:tRNA binding"/>
    <property type="evidence" value="ECO:0007669"/>
    <property type="project" value="UniProtKB-UniRule"/>
</dbReference>
<dbReference type="GO" id="GO:0070475">
    <property type="term" value="P:rRNA base methylation"/>
    <property type="evidence" value="ECO:0007669"/>
    <property type="project" value="UniProtKB-UniRule"/>
</dbReference>
<dbReference type="GO" id="GO:0030488">
    <property type="term" value="P:tRNA methylation"/>
    <property type="evidence" value="ECO:0007669"/>
    <property type="project" value="UniProtKB-UniRule"/>
</dbReference>
<dbReference type="CDD" id="cd01335">
    <property type="entry name" value="Radical_SAM"/>
    <property type="match status" value="1"/>
</dbReference>
<dbReference type="FunFam" id="3.20.20.70:FF:000008">
    <property type="entry name" value="Dual-specificity RNA methyltransferase RlmN"/>
    <property type="match status" value="1"/>
</dbReference>
<dbReference type="Gene3D" id="1.10.150.530">
    <property type="match status" value="1"/>
</dbReference>
<dbReference type="Gene3D" id="3.20.20.70">
    <property type="entry name" value="Aldolase class I"/>
    <property type="match status" value="1"/>
</dbReference>
<dbReference type="HAMAP" id="MF_01849">
    <property type="entry name" value="RNA_methyltr_RlmN"/>
    <property type="match status" value="1"/>
</dbReference>
<dbReference type="InterPro" id="IPR013785">
    <property type="entry name" value="Aldolase_TIM"/>
</dbReference>
<dbReference type="InterPro" id="IPR040072">
    <property type="entry name" value="Methyltransferase_A"/>
</dbReference>
<dbReference type="InterPro" id="IPR048641">
    <property type="entry name" value="RlmN_N"/>
</dbReference>
<dbReference type="InterPro" id="IPR027492">
    <property type="entry name" value="RNA_MTrfase_RlmN"/>
</dbReference>
<dbReference type="InterPro" id="IPR004383">
    <property type="entry name" value="rRNA_lsu_MTrfase_RlmN/Cfr"/>
</dbReference>
<dbReference type="InterPro" id="IPR007197">
    <property type="entry name" value="rSAM"/>
</dbReference>
<dbReference type="NCBIfam" id="TIGR00048">
    <property type="entry name" value="rRNA_mod_RlmN"/>
    <property type="match status" value="1"/>
</dbReference>
<dbReference type="PANTHER" id="PTHR30544">
    <property type="entry name" value="23S RRNA METHYLTRANSFERASE"/>
    <property type="match status" value="1"/>
</dbReference>
<dbReference type="PANTHER" id="PTHR30544:SF5">
    <property type="entry name" value="RADICAL SAM CORE DOMAIN-CONTAINING PROTEIN"/>
    <property type="match status" value="1"/>
</dbReference>
<dbReference type="Pfam" id="PF04055">
    <property type="entry name" value="Radical_SAM"/>
    <property type="match status" value="1"/>
</dbReference>
<dbReference type="Pfam" id="PF21016">
    <property type="entry name" value="RlmN_N"/>
    <property type="match status" value="1"/>
</dbReference>
<dbReference type="PIRSF" id="PIRSF006004">
    <property type="entry name" value="CHP00048"/>
    <property type="match status" value="1"/>
</dbReference>
<dbReference type="SFLD" id="SFLDF00275">
    <property type="entry name" value="adenosine_C2_methyltransferase"/>
    <property type="match status" value="1"/>
</dbReference>
<dbReference type="SFLD" id="SFLDS00029">
    <property type="entry name" value="Radical_SAM"/>
    <property type="match status" value="1"/>
</dbReference>
<dbReference type="SUPFAM" id="SSF102114">
    <property type="entry name" value="Radical SAM enzymes"/>
    <property type="match status" value="1"/>
</dbReference>
<dbReference type="PROSITE" id="PS51918">
    <property type="entry name" value="RADICAL_SAM"/>
    <property type="match status" value="1"/>
</dbReference>
<keyword id="KW-0004">4Fe-4S</keyword>
<keyword id="KW-0963">Cytoplasm</keyword>
<keyword id="KW-1015">Disulfide bond</keyword>
<keyword id="KW-0408">Iron</keyword>
<keyword id="KW-0411">Iron-sulfur</keyword>
<keyword id="KW-0479">Metal-binding</keyword>
<keyword id="KW-0489">Methyltransferase</keyword>
<keyword id="KW-0698">rRNA processing</keyword>
<keyword id="KW-0949">S-adenosyl-L-methionine</keyword>
<keyword id="KW-0808">Transferase</keyword>
<keyword id="KW-0819">tRNA processing</keyword>
<sequence length="408" mass="45675">MSVMDEIVVTKPQARTSASLEKPSLIGMSREEMGAALREKGVAEKQIKMRVSQLWNWIYVRGVSDFDHMTNVAKDMREMLKQHFTIARPEIVEEQVSNDGTRKWLLRFPPRGAGRPVEIEAVYIPEEGRGTLCISSQVGCTLTCSFCHTGTQRLVRNLTAEEILSQLLLARDRLGDFPDREAPQGTIMPAEGRKVSNIVMMGMGEPLYNFDAVKQALLIATDGDGLSLSRRRVTLSTSGVVPEIFRTGEEIGVMLAISLHAVRDDLRDLLVPINKKYPLKELIEACRTYPGLSNARRITFEYVMLKDVNDSLEDAKGLIKLLKGVPAKINLIPFNPWPGTNYQCSDWEQIEKFADFINSAGYASPIRTPRGRDILAACGQLKSESERMRKTERLAFEAMMIANHGADD</sequence>
<gene>
    <name evidence="1" type="primary">rlmN</name>
    <name type="ordered locus">RL4522</name>
</gene>
<reference key="1">
    <citation type="journal article" date="2006" name="Genome Biol.">
        <title>The genome of Rhizobium leguminosarum has recognizable core and accessory components.</title>
        <authorList>
            <person name="Young J.P.W."/>
            <person name="Crossman L.C."/>
            <person name="Johnston A.W.B."/>
            <person name="Thomson N.R."/>
            <person name="Ghazoui Z.F."/>
            <person name="Hull K.H."/>
            <person name="Wexler M."/>
            <person name="Curson A.R.J."/>
            <person name="Todd J.D."/>
            <person name="Poole P.S."/>
            <person name="Mauchline T.H."/>
            <person name="East A.K."/>
            <person name="Quail M.A."/>
            <person name="Churcher C."/>
            <person name="Arrowsmith C."/>
            <person name="Cherevach I."/>
            <person name="Chillingworth T."/>
            <person name="Clarke K."/>
            <person name="Cronin A."/>
            <person name="Davis P."/>
            <person name="Fraser A."/>
            <person name="Hance Z."/>
            <person name="Hauser H."/>
            <person name="Jagels K."/>
            <person name="Moule S."/>
            <person name="Mungall K."/>
            <person name="Norbertczak H."/>
            <person name="Rabbinowitsch E."/>
            <person name="Sanders M."/>
            <person name="Simmonds M."/>
            <person name="Whitehead S."/>
            <person name="Parkhill J."/>
        </authorList>
    </citation>
    <scope>NUCLEOTIDE SEQUENCE [LARGE SCALE GENOMIC DNA]</scope>
    <source>
        <strain>DSM 114642 / LMG 32736 / 3841</strain>
    </source>
</reference>
<evidence type="ECO:0000255" key="1">
    <source>
        <dbReference type="HAMAP-Rule" id="MF_01849"/>
    </source>
</evidence>
<evidence type="ECO:0000255" key="2">
    <source>
        <dbReference type="PROSITE-ProRule" id="PRU01266"/>
    </source>
</evidence>
<protein>
    <recommendedName>
        <fullName evidence="1">Dual-specificity RNA methyltransferase RlmN</fullName>
        <ecNumber evidence="1">2.1.1.192</ecNumber>
    </recommendedName>
    <alternativeName>
        <fullName evidence="1">23S rRNA (adenine(2503)-C(2))-methyltransferase</fullName>
    </alternativeName>
    <alternativeName>
        <fullName evidence="1">23S rRNA m2A2503 methyltransferase</fullName>
    </alternativeName>
    <alternativeName>
        <fullName evidence="1">Ribosomal RNA large subunit methyltransferase N</fullName>
    </alternativeName>
    <alternativeName>
        <fullName evidence="1">tRNA (adenine(37)-C(2))-methyltransferase</fullName>
    </alternativeName>
    <alternativeName>
        <fullName evidence="1">tRNA m2A37 methyltransferase</fullName>
    </alternativeName>
</protein>
<comment type="function">
    <text evidence="1">Specifically methylates position 2 of adenine 2503 in 23S rRNA and position 2 of adenine 37 in tRNAs. m2A2503 modification seems to play a crucial role in the proofreading step occurring at the peptidyl transferase center and thus would serve to optimize ribosomal fidelity.</text>
</comment>
<comment type="catalytic activity">
    <reaction evidence="1">
        <text>adenosine(2503) in 23S rRNA + 2 reduced [2Fe-2S]-[ferredoxin] + 2 S-adenosyl-L-methionine = 2-methyladenosine(2503) in 23S rRNA + 5'-deoxyadenosine + L-methionine + 2 oxidized [2Fe-2S]-[ferredoxin] + S-adenosyl-L-homocysteine</text>
        <dbReference type="Rhea" id="RHEA:42916"/>
        <dbReference type="Rhea" id="RHEA-COMP:10000"/>
        <dbReference type="Rhea" id="RHEA-COMP:10001"/>
        <dbReference type="Rhea" id="RHEA-COMP:10152"/>
        <dbReference type="Rhea" id="RHEA-COMP:10282"/>
        <dbReference type="ChEBI" id="CHEBI:17319"/>
        <dbReference type="ChEBI" id="CHEBI:33737"/>
        <dbReference type="ChEBI" id="CHEBI:33738"/>
        <dbReference type="ChEBI" id="CHEBI:57844"/>
        <dbReference type="ChEBI" id="CHEBI:57856"/>
        <dbReference type="ChEBI" id="CHEBI:59789"/>
        <dbReference type="ChEBI" id="CHEBI:74411"/>
        <dbReference type="ChEBI" id="CHEBI:74497"/>
        <dbReference type="EC" id="2.1.1.192"/>
    </reaction>
</comment>
<comment type="catalytic activity">
    <reaction evidence="1">
        <text>adenosine(37) in tRNA + 2 reduced [2Fe-2S]-[ferredoxin] + 2 S-adenosyl-L-methionine = 2-methyladenosine(37) in tRNA + 5'-deoxyadenosine + L-methionine + 2 oxidized [2Fe-2S]-[ferredoxin] + S-adenosyl-L-homocysteine</text>
        <dbReference type="Rhea" id="RHEA:43332"/>
        <dbReference type="Rhea" id="RHEA-COMP:10000"/>
        <dbReference type="Rhea" id="RHEA-COMP:10001"/>
        <dbReference type="Rhea" id="RHEA-COMP:10162"/>
        <dbReference type="Rhea" id="RHEA-COMP:10485"/>
        <dbReference type="ChEBI" id="CHEBI:17319"/>
        <dbReference type="ChEBI" id="CHEBI:33737"/>
        <dbReference type="ChEBI" id="CHEBI:33738"/>
        <dbReference type="ChEBI" id="CHEBI:57844"/>
        <dbReference type="ChEBI" id="CHEBI:57856"/>
        <dbReference type="ChEBI" id="CHEBI:59789"/>
        <dbReference type="ChEBI" id="CHEBI:74411"/>
        <dbReference type="ChEBI" id="CHEBI:74497"/>
        <dbReference type="EC" id="2.1.1.192"/>
    </reaction>
</comment>
<comment type="cofactor">
    <cofactor evidence="1">
        <name>[4Fe-4S] cluster</name>
        <dbReference type="ChEBI" id="CHEBI:49883"/>
    </cofactor>
    <text evidence="1">Binds 1 [4Fe-4S] cluster. The cluster is coordinated with 3 cysteines and an exchangeable S-adenosyl-L-methionine.</text>
</comment>
<comment type="subcellular location">
    <subcellularLocation>
        <location evidence="1">Cytoplasm</location>
    </subcellularLocation>
</comment>
<comment type="miscellaneous">
    <text evidence="1">Reaction proceeds by a ping-pong mechanism involving intermediate methylation of a conserved cysteine residue.</text>
</comment>
<comment type="similarity">
    <text evidence="1">Belongs to the radical SAM superfamily. RlmN family.</text>
</comment>
<proteinExistence type="inferred from homology"/>
<name>RLMN_RHIJ3</name>